<sequence>MSMAGKNYRNASAKVNRAQEYELAEAIEKVKEITTTKFDATVDVAIKLGVDPRHADQVVRGTVMLPYGTGKTVSVLVVCKENKAEEAREAGADFVGFEDYIEKIQNGWTDVDVIVATPDVMGQLGKVARILGPRGLMPNPKSGTVTMDVAKAVKEVKAGKIEFRVDKAGNIHAPVGKVSFDSANLAGNITSFIKEVVRLKPSAAKGQYLQGITISSTMSPGVKVKKDKFVA</sequence>
<protein>
    <recommendedName>
        <fullName evidence="1">Large ribosomal subunit protein uL1</fullName>
    </recommendedName>
    <alternativeName>
        <fullName evidence="2">50S ribosomal protein L1</fullName>
    </alternativeName>
</protein>
<name>RL1_CHLTE</name>
<feature type="chain" id="PRO_0000125641" description="Large ribosomal subunit protein uL1">
    <location>
        <begin position="1"/>
        <end position="231"/>
    </location>
</feature>
<organism>
    <name type="scientific">Chlorobaculum tepidum (strain ATCC 49652 / DSM 12025 / NBRC 103806 / TLS)</name>
    <name type="common">Chlorobium tepidum</name>
    <dbReference type="NCBI Taxonomy" id="194439"/>
    <lineage>
        <taxon>Bacteria</taxon>
        <taxon>Pseudomonadati</taxon>
        <taxon>Chlorobiota</taxon>
        <taxon>Chlorobiia</taxon>
        <taxon>Chlorobiales</taxon>
        <taxon>Chlorobiaceae</taxon>
        <taxon>Chlorobaculum</taxon>
    </lineage>
</organism>
<proteinExistence type="inferred from homology"/>
<gene>
    <name evidence="1" type="primary">rplA</name>
    <name type="ordered locus">CT0152</name>
</gene>
<dbReference type="EMBL" id="AE006470">
    <property type="protein sequence ID" value="AAM71400.1"/>
    <property type="molecule type" value="Genomic_DNA"/>
</dbReference>
<dbReference type="RefSeq" id="NP_661058.1">
    <property type="nucleotide sequence ID" value="NC_002932.3"/>
</dbReference>
<dbReference type="SMR" id="Q8KG18"/>
<dbReference type="STRING" id="194439.CT0152"/>
<dbReference type="EnsemblBacteria" id="AAM71400">
    <property type="protein sequence ID" value="AAM71400"/>
    <property type="gene ID" value="CT0152"/>
</dbReference>
<dbReference type="KEGG" id="cte:CT0152"/>
<dbReference type="PATRIC" id="fig|194439.7.peg.149"/>
<dbReference type="eggNOG" id="COG0081">
    <property type="taxonomic scope" value="Bacteria"/>
</dbReference>
<dbReference type="HOGENOM" id="CLU_062853_0_0_10"/>
<dbReference type="OrthoDB" id="9803740at2"/>
<dbReference type="Proteomes" id="UP000001007">
    <property type="component" value="Chromosome"/>
</dbReference>
<dbReference type="GO" id="GO:0015934">
    <property type="term" value="C:large ribosomal subunit"/>
    <property type="evidence" value="ECO:0007669"/>
    <property type="project" value="InterPro"/>
</dbReference>
<dbReference type="GO" id="GO:0019843">
    <property type="term" value="F:rRNA binding"/>
    <property type="evidence" value="ECO:0007669"/>
    <property type="project" value="UniProtKB-UniRule"/>
</dbReference>
<dbReference type="GO" id="GO:0003735">
    <property type="term" value="F:structural constituent of ribosome"/>
    <property type="evidence" value="ECO:0007669"/>
    <property type="project" value="InterPro"/>
</dbReference>
<dbReference type="GO" id="GO:0000049">
    <property type="term" value="F:tRNA binding"/>
    <property type="evidence" value="ECO:0007669"/>
    <property type="project" value="UniProtKB-KW"/>
</dbReference>
<dbReference type="GO" id="GO:0006417">
    <property type="term" value="P:regulation of translation"/>
    <property type="evidence" value="ECO:0007669"/>
    <property type="project" value="UniProtKB-KW"/>
</dbReference>
<dbReference type="GO" id="GO:0006412">
    <property type="term" value="P:translation"/>
    <property type="evidence" value="ECO:0007669"/>
    <property type="project" value="UniProtKB-UniRule"/>
</dbReference>
<dbReference type="CDD" id="cd00403">
    <property type="entry name" value="Ribosomal_L1"/>
    <property type="match status" value="1"/>
</dbReference>
<dbReference type="FunFam" id="3.40.50.790:FF:000001">
    <property type="entry name" value="50S ribosomal protein L1"/>
    <property type="match status" value="1"/>
</dbReference>
<dbReference type="Gene3D" id="3.30.190.20">
    <property type="match status" value="1"/>
</dbReference>
<dbReference type="Gene3D" id="3.40.50.790">
    <property type="match status" value="1"/>
</dbReference>
<dbReference type="HAMAP" id="MF_01318_B">
    <property type="entry name" value="Ribosomal_uL1_B"/>
    <property type="match status" value="1"/>
</dbReference>
<dbReference type="InterPro" id="IPR005878">
    <property type="entry name" value="Ribosom_uL1_bac-type"/>
</dbReference>
<dbReference type="InterPro" id="IPR002143">
    <property type="entry name" value="Ribosomal_uL1"/>
</dbReference>
<dbReference type="InterPro" id="IPR023674">
    <property type="entry name" value="Ribosomal_uL1-like"/>
</dbReference>
<dbReference type="InterPro" id="IPR028364">
    <property type="entry name" value="Ribosomal_uL1/biogenesis"/>
</dbReference>
<dbReference type="InterPro" id="IPR016095">
    <property type="entry name" value="Ribosomal_uL1_3-a/b-sand"/>
</dbReference>
<dbReference type="InterPro" id="IPR023673">
    <property type="entry name" value="Ribosomal_uL1_CS"/>
</dbReference>
<dbReference type="NCBIfam" id="TIGR01169">
    <property type="entry name" value="rplA_bact"/>
    <property type="match status" value="1"/>
</dbReference>
<dbReference type="PANTHER" id="PTHR36427">
    <property type="entry name" value="54S RIBOSOMAL PROTEIN L1, MITOCHONDRIAL"/>
    <property type="match status" value="1"/>
</dbReference>
<dbReference type="PANTHER" id="PTHR36427:SF3">
    <property type="entry name" value="LARGE RIBOSOMAL SUBUNIT PROTEIN UL1M"/>
    <property type="match status" value="1"/>
</dbReference>
<dbReference type="Pfam" id="PF00687">
    <property type="entry name" value="Ribosomal_L1"/>
    <property type="match status" value="1"/>
</dbReference>
<dbReference type="PIRSF" id="PIRSF002155">
    <property type="entry name" value="Ribosomal_L1"/>
    <property type="match status" value="1"/>
</dbReference>
<dbReference type="SUPFAM" id="SSF56808">
    <property type="entry name" value="Ribosomal protein L1"/>
    <property type="match status" value="1"/>
</dbReference>
<dbReference type="PROSITE" id="PS01199">
    <property type="entry name" value="RIBOSOMAL_L1"/>
    <property type="match status" value="1"/>
</dbReference>
<keyword id="KW-1185">Reference proteome</keyword>
<keyword id="KW-0678">Repressor</keyword>
<keyword id="KW-0687">Ribonucleoprotein</keyword>
<keyword id="KW-0689">Ribosomal protein</keyword>
<keyword id="KW-0694">RNA-binding</keyword>
<keyword id="KW-0699">rRNA-binding</keyword>
<keyword id="KW-0810">Translation regulation</keyword>
<keyword id="KW-0820">tRNA-binding</keyword>
<accession>Q8KG18</accession>
<reference key="1">
    <citation type="journal article" date="2002" name="Proc. Natl. Acad. Sci. U.S.A.">
        <title>The complete genome sequence of Chlorobium tepidum TLS, a photosynthetic, anaerobic, green-sulfur bacterium.</title>
        <authorList>
            <person name="Eisen J.A."/>
            <person name="Nelson K.E."/>
            <person name="Paulsen I.T."/>
            <person name="Heidelberg J.F."/>
            <person name="Wu M."/>
            <person name="Dodson R.J."/>
            <person name="DeBoy R.T."/>
            <person name="Gwinn M.L."/>
            <person name="Nelson W.C."/>
            <person name="Haft D.H."/>
            <person name="Hickey E.K."/>
            <person name="Peterson J.D."/>
            <person name="Durkin A.S."/>
            <person name="Kolonay J.F."/>
            <person name="Yang F."/>
            <person name="Holt I.E."/>
            <person name="Umayam L.A."/>
            <person name="Mason T.M."/>
            <person name="Brenner M."/>
            <person name="Shea T.P."/>
            <person name="Parksey D.S."/>
            <person name="Nierman W.C."/>
            <person name="Feldblyum T.V."/>
            <person name="Hansen C.L."/>
            <person name="Craven M.B."/>
            <person name="Radune D."/>
            <person name="Vamathevan J.J."/>
            <person name="Khouri H.M."/>
            <person name="White O."/>
            <person name="Gruber T.M."/>
            <person name="Ketchum K.A."/>
            <person name="Venter J.C."/>
            <person name="Tettelin H."/>
            <person name="Bryant D.A."/>
            <person name="Fraser C.M."/>
        </authorList>
    </citation>
    <scope>NUCLEOTIDE SEQUENCE [LARGE SCALE GENOMIC DNA]</scope>
    <source>
        <strain>ATCC 49652 / DSM 12025 / NBRC 103806 / TLS</strain>
    </source>
</reference>
<evidence type="ECO:0000255" key="1">
    <source>
        <dbReference type="HAMAP-Rule" id="MF_01318"/>
    </source>
</evidence>
<evidence type="ECO:0000305" key="2"/>
<comment type="function">
    <text evidence="1">Binds directly to 23S rRNA. The L1 stalk is quite mobile in the ribosome, and is involved in E site tRNA release.</text>
</comment>
<comment type="function">
    <text evidence="1">Protein L1 is also a translational repressor protein, it controls the translation of the L11 operon by binding to its mRNA.</text>
</comment>
<comment type="subunit">
    <text evidence="1">Part of the 50S ribosomal subunit.</text>
</comment>
<comment type="similarity">
    <text evidence="1">Belongs to the universal ribosomal protein uL1 family.</text>
</comment>